<sequence length="83" mass="9236">MEALGSGHYVGGSIRSMAAAALSGLAVRLSRPQGTRGSYGAFCKTLTRTLLTFFDLAWRLRKNFFYFYILASVILNVHLQVYI</sequence>
<name>SIM10_HUMAN</name>
<feature type="chain" id="PRO_0000344238" description="Small integral membrane protein 10">
    <location>
        <begin position="1"/>
        <end position="83"/>
    </location>
</feature>
<feature type="transmembrane region" description="Helical" evidence="1">
    <location>
        <begin position="64"/>
        <end position="82"/>
    </location>
</feature>
<proteinExistence type="evidence at protein level"/>
<gene>
    <name type="primary">SMIM10</name>
    <name type="synonym">CXorf69</name>
</gene>
<evidence type="ECO:0000255" key="1"/>
<evidence type="ECO:0000305" key="2"/>
<organism>
    <name type="scientific">Homo sapiens</name>
    <name type="common">Human</name>
    <dbReference type="NCBI Taxonomy" id="9606"/>
    <lineage>
        <taxon>Eukaryota</taxon>
        <taxon>Metazoa</taxon>
        <taxon>Chordata</taxon>
        <taxon>Craniata</taxon>
        <taxon>Vertebrata</taxon>
        <taxon>Euteleostomi</taxon>
        <taxon>Mammalia</taxon>
        <taxon>Eutheria</taxon>
        <taxon>Euarchontoglires</taxon>
        <taxon>Primates</taxon>
        <taxon>Haplorrhini</taxon>
        <taxon>Catarrhini</taxon>
        <taxon>Hominidae</taxon>
        <taxon>Homo</taxon>
    </lineage>
</organism>
<reference key="1">
    <citation type="journal article" date="2005" name="Nature">
        <title>The DNA sequence of the human X chromosome.</title>
        <authorList>
            <person name="Ross M.T."/>
            <person name="Grafham D.V."/>
            <person name="Coffey A.J."/>
            <person name="Scherer S."/>
            <person name="McLay K."/>
            <person name="Muzny D."/>
            <person name="Platzer M."/>
            <person name="Howell G.R."/>
            <person name="Burrows C."/>
            <person name="Bird C.P."/>
            <person name="Frankish A."/>
            <person name="Lovell F.L."/>
            <person name="Howe K.L."/>
            <person name="Ashurst J.L."/>
            <person name="Fulton R.S."/>
            <person name="Sudbrak R."/>
            <person name="Wen G."/>
            <person name="Jones M.C."/>
            <person name="Hurles M.E."/>
            <person name="Andrews T.D."/>
            <person name="Scott C.E."/>
            <person name="Searle S."/>
            <person name="Ramser J."/>
            <person name="Whittaker A."/>
            <person name="Deadman R."/>
            <person name="Carter N.P."/>
            <person name="Hunt S.E."/>
            <person name="Chen R."/>
            <person name="Cree A."/>
            <person name="Gunaratne P."/>
            <person name="Havlak P."/>
            <person name="Hodgson A."/>
            <person name="Metzker M.L."/>
            <person name="Richards S."/>
            <person name="Scott G."/>
            <person name="Steffen D."/>
            <person name="Sodergren E."/>
            <person name="Wheeler D.A."/>
            <person name="Worley K.C."/>
            <person name="Ainscough R."/>
            <person name="Ambrose K.D."/>
            <person name="Ansari-Lari M.A."/>
            <person name="Aradhya S."/>
            <person name="Ashwell R.I."/>
            <person name="Babbage A.K."/>
            <person name="Bagguley C.L."/>
            <person name="Ballabio A."/>
            <person name="Banerjee R."/>
            <person name="Barker G.E."/>
            <person name="Barlow K.F."/>
            <person name="Barrett I.P."/>
            <person name="Bates K.N."/>
            <person name="Beare D.M."/>
            <person name="Beasley H."/>
            <person name="Beasley O."/>
            <person name="Beck A."/>
            <person name="Bethel G."/>
            <person name="Blechschmidt K."/>
            <person name="Brady N."/>
            <person name="Bray-Allen S."/>
            <person name="Bridgeman A.M."/>
            <person name="Brown A.J."/>
            <person name="Brown M.J."/>
            <person name="Bonnin D."/>
            <person name="Bruford E.A."/>
            <person name="Buhay C."/>
            <person name="Burch P."/>
            <person name="Burford D."/>
            <person name="Burgess J."/>
            <person name="Burrill W."/>
            <person name="Burton J."/>
            <person name="Bye J.M."/>
            <person name="Carder C."/>
            <person name="Carrel L."/>
            <person name="Chako J."/>
            <person name="Chapman J.C."/>
            <person name="Chavez D."/>
            <person name="Chen E."/>
            <person name="Chen G."/>
            <person name="Chen Y."/>
            <person name="Chen Z."/>
            <person name="Chinault C."/>
            <person name="Ciccodicola A."/>
            <person name="Clark S.Y."/>
            <person name="Clarke G."/>
            <person name="Clee C.M."/>
            <person name="Clegg S."/>
            <person name="Clerc-Blankenburg K."/>
            <person name="Clifford K."/>
            <person name="Cobley V."/>
            <person name="Cole C.G."/>
            <person name="Conquer J.S."/>
            <person name="Corby N."/>
            <person name="Connor R.E."/>
            <person name="David R."/>
            <person name="Davies J."/>
            <person name="Davis C."/>
            <person name="Davis J."/>
            <person name="Delgado O."/>
            <person name="Deshazo D."/>
            <person name="Dhami P."/>
            <person name="Ding Y."/>
            <person name="Dinh H."/>
            <person name="Dodsworth S."/>
            <person name="Draper H."/>
            <person name="Dugan-Rocha S."/>
            <person name="Dunham A."/>
            <person name="Dunn M."/>
            <person name="Durbin K.J."/>
            <person name="Dutta I."/>
            <person name="Eades T."/>
            <person name="Ellwood M."/>
            <person name="Emery-Cohen A."/>
            <person name="Errington H."/>
            <person name="Evans K.L."/>
            <person name="Faulkner L."/>
            <person name="Francis F."/>
            <person name="Frankland J."/>
            <person name="Fraser A.E."/>
            <person name="Galgoczy P."/>
            <person name="Gilbert J."/>
            <person name="Gill R."/>
            <person name="Gloeckner G."/>
            <person name="Gregory S.G."/>
            <person name="Gribble S."/>
            <person name="Griffiths C."/>
            <person name="Grocock R."/>
            <person name="Gu Y."/>
            <person name="Gwilliam R."/>
            <person name="Hamilton C."/>
            <person name="Hart E.A."/>
            <person name="Hawes A."/>
            <person name="Heath P.D."/>
            <person name="Heitmann K."/>
            <person name="Hennig S."/>
            <person name="Hernandez J."/>
            <person name="Hinzmann B."/>
            <person name="Ho S."/>
            <person name="Hoffs M."/>
            <person name="Howden P.J."/>
            <person name="Huckle E.J."/>
            <person name="Hume J."/>
            <person name="Hunt P.J."/>
            <person name="Hunt A.R."/>
            <person name="Isherwood J."/>
            <person name="Jacob L."/>
            <person name="Johnson D."/>
            <person name="Jones S."/>
            <person name="de Jong P.J."/>
            <person name="Joseph S.S."/>
            <person name="Keenan S."/>
            <person name="Kelly S."/>
            <person name="Kershaw J.K."/>
            <person name="Khan Z."/>
            <person name="Kioschis P."/>
            <person name="Klages S."/>
            <person name="Knights A.J."/>
            <person name="Kosiura A."/>
            <person name="Kovar-Smith C."/>
            <person name="Laird G.K."/>
            <person name="Langford C."/>
            <person name="Lawlor S."/>
            <person name="Leversha M."/>
            <person name="Lewis L."/>
            <person name="Liu W."/>
            <person name="Lloyd C."/>
            <person name="Lloyd D.M."/>
            <person name="Loulseged H."/>
            <person name="Loveland J.E."/>
            <person name="Lovell J.D."/>
            <person name="Lozado R."/>
            <person name="Lu J."/>
            <person name="Lyne R."/>
            <person name="Ma J."/>
            <person name="Maheshwari M."/>
            <person name="Matthews L.H."/>
            <person name="McDowall J."/>
            <person name="McLaren S."/>
            <person name="McMurray A."/>
            <person name="Meidl P."/>
            <person name="Meitinger T."/>
            <person name="Milne S."/>
            <person name="Miner G."/>
            <person name="Mistry S.L."/>
            <person name="Morgan M."/>
            <person name="Morris S."/>
            <person name="Mueller I."/>
            <person name="Mullikin J.C."/>
            <person name="Nguyen N."/>
            <person name="Nordsiek G."/>
            <person name="Nyakatura G."/>
            <person name="O'dell C.N."/>
            <person name="Okwuonu G."/>
            <person name="Palmer S."/>
            <person name="Pandian R."/>
            <person name="Parker D."/>
            <person name="Parrish J."/>
            <person name="Pasternak S."/>
            <person name="Patel D."/>
            <person name="Pearce A.V."/>
            <person name="Pearson D.M."/>
            <person name="Pelan S.E."/>
            <person name="Perez L."/>
            <person name="Porter K.M."/>
            <person name="Ramsey Y."/>
            <person name="Reichwald K."/>
            <person name="Rhodes S."/>
            <person name="Ridler K.A."/>
            <person name="Schlessinger D."/>
            <person name="Schueler M.G."/>
            <person name="Sehra H.K."/>
            <person name="Shaw-Smith C."/>
            <person name="Shen H."/>
            <person name="Sheridan E.M."/>
            <person name="Shownkeen R."/>
            <person name="Skuce C.D."/>
            <person name="Smith M.L."/>
            <person name="Sotheran E.C."/>
            <person name="Steingruber H.E."/>
            <person name="Steward C.A."/>
            <person name="Storey R."/>
            <person name="Swann R.M."/>
            <person name="Swarbreck D."/>
            <person name="Tabor P.E."/>
            <person name="Taudien S."/>
            <person name="Taylor T."/>
            <person name="Teague B."/>
            <person name="Thomas K."/>
            <person name="Thorpe A."/>
            <person name="Timms K."/>
            <person name="Tracey A."/>
            <person name="Trevanion S."/>
            <person name="Tromans A.C."/>
            <person name="d'Urso M."/>
            <person name="Verduzco D."/>
            <person name="Villasana D."/>
            <person name="Waldron L."/>
            <person name="Wall M."/>
            <person name="Wang Q."/>
            <person name="Warren J."/>
            <person name="Warry G.L."/>
            <person name="Wei X."/>
            <person name="West A."/>
            <person name="Whitehead S.L."/>
            <person name="Whiteley M.N."/>
            <person name="Wilkinson J.E."/>
            <person name="Willey D.L."/>
            <person name="Williams G."/>
            <person name="Williams L."/>
            <person name="Williamson A."/>
            <person name="Williamson H."/>
            <person name="Wilming L."/>
            <person name="Woodmansey R.L."/>
            <person name="Wray P.W."/>
            <person name="Yen J."/>
            <person name="Zhang J."/>
            <person name="Zhou J."/>
            <person name="Zoghbi H."/>
            <person name="Zorilla S."/>
            <person name="Buck D."/>
            <person name="Reinhardt R."/>
            <person name="Poustka A."/>
            <person name="Rosenthal A."/>
            <person name="Lehrach H."/>
            <person name="Meindl A."/>
            <person name="Minx P.J."/>
            <person name="Hillier L.W."/>
            <person name="Willard H.F."/>
            <person name="Wilson R.K."/>
            <person name="Waterston R.H."/>
            <person name="Rice C.M."/>
            <person name="Vaudin M."/>
            <person name="Coulson A."/>
            <person name="Nelson D.L."/>
            <person name="Weinstock G."/>
            <person name="Sulston J.E."/>
            <person name="Durbin R.M."/>
            <person name="Hubbard T."/>
            <person name="Gibbs R.A."/>
            <person name="Beck S."/>
            <person name="Rogers J."/>
            <person name="Bentley D.R."/>
        </authorList>
    </citation>
    <scope>NUCLEOTIDE SEQUENCE [LARGE SCALE GENOMIC DNA]</scope>
</reference>
<reference key="2">
    <citation type="journal article" date="2004" name="Genome Res.">
        <title>The status, quality, and expansion of the NIH full-length cDNA project: the Mammalian Gene Collection (MGC).</title>
        <authorList>
            <consortium name="The MGC Project Team"/>
        </authorList>
    </citation>
    <scope>NUCLEOTIDE SEQUENCE [LARGE SCALE MRNA]</scope>
    <source>
        <tissue>Eye</tissue>
    </source>
</reference>
<keyword id="KW-0472">Membrane</keyword>
<keyword id="KW-1267">Proteomics identification</keyword>
<keyword id="KW-1185">Reference proteome</keyword>
<keyword id="KW-0812">Transmembrane</keyword>
<keyword id="KW-1133">Transmembrane helix</keyword>
<protein>
    <recommendedName>
        <fullName>Small integral membrane protein 10</fullName>
    </recommendedName>
</protein>
<dbReference type="EMBL" id="Z83826">
    <property type="status" value="NOT_ANNOTATED_CDS"/>
    <property type="molecule type" value="Genomic_DNA"/>
</dbReference>
<dbReference type="EMBL" id="BC008642">
    <property type="protein sequence ID" value="AAH08642.1"/>
    <property type="status" value="ALT_INIT"/>
    <property type="molecule type" value="mRNA"/>
</dbReference>
<dbReference type="CCDS" id="CCDS55502.1"/>
<dbReference type="RefSeq" id="NP_001156910.1">
    <property type="nucleotide sequence ID" value="NM_001163438.2"/>
</dbReference>
<dbReference type="BioMuta" id="SMIM10"/>
<dbReference type="jPOST" id="Q96HG1"/>
<dbReference type="MassIVE" id="Q96HG1"/>
<dbReference type="PaxDb" id="9606-ENSP00000328335"/>
<dbReference type="PeptideAtlas" id="Q96HG1"/>
<dbReference type="ProteomicsDB" id="76744"/>
<dbReference type="Pumba" id="Q96HG1"/>
<dbReference type="DNASU" id="644538"/>
<dbReference type="Ensembl" id="ENST00000330288.6">
    <property type="protein sequence ID" value="ENSP00000328335.4"/>
    <property type="gene ID" value="ENSG00000184785.6"/>
</dbReference>
<dbReference type="GeneID" id="644538"/>
<dbReference type="KEGG" id="hsa:644538"/>
<dbReference type="MANE-Select" id="ENST00000330288.6">
    <property type="protein sequence ID" value="ENSP00000328335.4"/>
    <property type="RefSeq nucleotide sequence ID" value="NM_001163438.2"/>
    <property type="RefSeq protein sequence ID" value="NP_001156910.1"/>
</dbReference>
<dbReference type="UCSC" id="uc011mvs.2">
    <property type="organism name" value="human"/>
</dbReference>
<dbReference type="AGR" id="HGNC:41913"/>
<dbReference type="CTD" id="644538"/>
<dbReference type="DisGeNET" id="644538"/>
<dbReference type="GeneCards" id="SMIM10"/>
<dbReference type="HGNC" id="HGNC:41913">
    <property type="gene designation" value="SMIM10"/>
</dbReference>
<dbReference type="HPA" id="ENSG00000184785">
    <property type="expression patterns" value="Low tissue specificity"/>
</dbReference>
<dbReference type="neXtProt" id="NX_Q96HG1"/>
<dbReference type="OpenTargets" id="ENSG00000184785"/>
<dbReference type="VEuPathDB" id="HostDB:ENSG00000184785"/>
<dbReference type="eggNOG" id="ENOG502S7BN">
    <property type="taxonomic scope" value="Eukaryota"/>
</dbReference>
<dbReference type="GeneTree" id="ENSGT00390000014547"/>
<dbReference type="HOGENOM" id="CLU_186454_1_0_1"/>
<dbReference type="InParanoid" id="Q96HG1"/>
<dbReference type="OMA" id="LNIHLQV"/>
<dbReference type="OrthoDB" id="9619930at2759"/>
<dbReference type="PAN-GO" id="Q96HG1">
    <property type="GO annotations" value="0 GO annotations based on evolutionary models"/>
</dbReference>
<dbReference type="PhylomeDB" id="Q96HG1"/>
<dbReference type="TreeFam" id="TF336091"/>
<dbReference type="PathwayCommons" id="Q96HG1"/>
<dbReference type="BioGRID-ORCS" id="644538">
    <property type="hits" value="13 hits in 696 CRISPR screens"/>
</dbReference>
<dbReference type="GenomeRNAi" id="644538"/>
<dbReference type="Pharos" id="Q96HG1">
    <property type="development level" value="Tdark"/>
</dbReference>
<dbReference type="PRO" id="PR:Q96HG1"/>
<dbReference type="Proteomes" id="UP000005640">
    <property type="component" value="Chromosome X"/>
</dbReference>
<dbReference type="RNAct" id="Q96HG1">
    <property type="molecule type" value="protein"/>
</dbReference>
<dbReference type="Bgee" id="ENSG00000184785">
    <property type="expression patterns" value="Expressed in popliteal artery and 115 other cell types or tissues"/>
</dbReference>
<dbReference type="GO" id="GO:0016020">
    <property type="term" value="C:membrane"/>
    <property type="evidence" value="ECO:0007669"/>
    <property type="project" value="UniProtKB-SubCell"/>
</dbReference>
<dbReference type="InterPro" id="IPR029367">
    <property type="entry name" value="SMIM10"/>
</dbReference>
<dbReference type="PANTHER" id="PTHR34446">
    <property type="entry name" value="SMALL INTEGRAL MEMBRANE PROTEIN 10"/>
    <property type="match status" value="1"/>
</dbReference>
<dbReference type="PANTHER" id="PTHR34446:SF4">
    <property type="entry name" value="SMALL INTEGRAL MEMBRANE PROTEIN 10"/>
    <property type="match status" value="1"/>
</dbReference>
<dbReference type="Pfam" id="PF15118">
    <property type="entry name" value="DUF4560"/>
    <property type="match status" value="1"/>
</dbReference>
<comment type="subcellular location">
    <subcellularLocation>
        <location evidence="1">Membrane</location>
        <topology evidence="1">Single-pass membrane protein</topology>
    </subcellularLocation>
</comment>
<comment type="sequence caution" evidence="2">
    <conflict type="erroneous initiation">
        <sequence resource="EMBL-CDS" id="AAH08642"/>
    </conflict>
    <text>Truncated N-terminus.</text>
</comment>
<accession>Q96HG1</accession>